<gene>
    <name evidence="1" type="primary">rpoB</name>
    <name type="ORF">PSC012</name>
</gene>
<sequence length="1060" mass="120546">MSTIPGFNQIQFEGFCRFIDQGLTEELSKFPKIEDTNQEIDFELFLERYQLVEPSIKERDAVYESLTYSSELYVSARLIWKNDRRRYIQEQTILIGKIPLMTSLGAFIVNGIYRIVINQILQSPGIYYQSELNDNGISVYTGTIISDWGGRLELEIDRKTRIWVRVSRQQKLSILVLLSAMGLNIREILENVCYPELFLSFLNDKKQIGSKENAILEFYQQFACVEGDPVFSESLSKDLQKKFFQQRCELGGIGRRNMNRRLNLDIPQNNTFLLPRDILAAADRLIRIKFGMGTLDDMNHLQNKRIRSVADLLQEQFGLALVRLENMARGNIYAALKHNWTPTPQNLVNSTPLTDTYKVFFRLHPLSQVLDRTNPLTQIVHGRKLSYLGPGGLTARTATFPIRDIHPSHYGRICPIDTSEGINVGLIGSLAIHARIGRWGSLESPFYKISERSKGARMLYLSPGRDEYYMVAAGNSLALNQGIQEEQVVPARYRQEFLTIAWEQVHLRSIFSFQYFSIGASLIPFIEHNDANRALMSSNMQRQAVPLSQSEKCIVGTGLEGQAALDSGALAIAEHEGEIIYTDTDKILLSGNGDTLRIPLVMYQRSNKNTCMHQKPQVQRGKCIKKGQILAYGAATVGGELALGKNVLVAYMPWEGYNFEDAVLISERLVYEDIYTSFHIRKYEIQINQGSERVTNEIPHLEVHLLRNLDKNGIVMLGSWVETGDILVGKLTPQMVKESSYAPEDRLLRTILGMRVYTSKETCLKLPIGGRGRVIDVRWVQSSKTDETEKTESIRVYILQKREIKVGDKVAGRHGNKGIISKILPRQDMPYLQDGRPVDMVFNPLGVPSRMNVGQIFESSLGLAGGLLDRHYRIAPFDERYEQEASRKLVFSELYEASKQTVNPWIFEPESPGKSRIFDGRTGDPFEQPVIIGKPYILKLIHQVDDKIHGRSSGRYSRLTQQPLKGRAKKGGQRVGEMEVWALEGFGVAYILQEMLTYKSDHIRARQEVLGTIIFGGRIPTPEDAPESFRLFVRELRSLALELNHFLVSEKTFQLNRKEA</sequence>
<evidence type="ECO:0000255" key="1">
    <source>
        <dbReference type="HAMAP-Rule" id="MF_01321"/>
    </source>
</evidence>
<evidence type="ECO:0000305" key="2"/>
<organism>
    <name type="scientific">Lactuca sativa</name>
    <name type="common">Garden lettuce</name>
    <dbReference type="NCBI Taxonomy" id="4236"/>
    <lineage>
        <taxon>Eukaryota</taxon>
        <taxon>Viridiplantae</taxon>
        <taxon>Streptophyta</taxon>
        <taxon>Embryophyta</taxon>
        <taxon>Tracheophyta</taxon>
        <taxon>Spermatophyta</taxon>
        <taxon>Magnoliopsida</taxon>
        <taxon>eudicotyledons</taxon>
        <taxon>Gunneridae</taxon>
        <taxon>Pentapetalae</taxon>
        <taxon>asterids</taxon>
        <taxon>campanulids</taxon>
        <taxon>Asterales</taxon>
        <taxon>Asteraceae</taxon>
        <taxon>Cichorioideae</taxon>
        <taxon>Cichorieae</taxon>
        <taxon>Lactucinae</taxon>
        <taxon>Lactuca</taxon>
    </lineage>
</organism>
<reference key="1">
    <citation type="journal article" date="2005" name="Mol. Biol. Evol.">
        <title>Two chloroplast DNA inversions originated simultaneously during the early evolution of the sunflower family (Asteraceae).</title>
        <authorList>
            <person name="Kim K.-J."/>
            <person name="Choi K.-S."/>
            <person name="Jansen R.K."/>
        </authorList>
    </citation>
    <scope>NUCLEOTIDE SEQUENCE [GENOMIC DNA]</scope>
</reference>
<reference key="2">
    <citation type="journal article" date="2006" name="Transgenic Res.">
        <title>Efficient and stable transformation of Lactuca sativa L. cv. Cisco (lettuce) plastids.</title>
        <authorList>
            <person name="Kanamoto H."/>
            <person name="Yamashita A."/>
            <person name="Asao H."/>
            <person name="Okumura S."/>
            <person name="Takase H."/>
            <person name="Hattori M."/>
            <person name="Yokota A."/>
            <person name="Tomizawa K."/>
        </authorList>
    </citation>
    <scope>NUCLEOTIDE SEQUENCE [LARGE SCALE GENOMIC DNA]</scope>
    <source>
        <strain>cv. Cisco</strain>
    </source>
</reference>
<reference key="3">
    <citation type="submission" date="2006-01" db="EMBL/GenBank/DDBJ databases">
        <title>A comparison of the first two published chloroplast genomes in Asteraceae: Lactuca and Helianthus.</title>
        <authorList>
            <person name="Timme R.E."/>
            <person name="Kuehl J.V."/>
            <person name="Boore J.L."/>
            <person name="Jansen R.K."/>
        </authorList>
    </citation>
    <scope>NUCLEOTIDE SEQUENCE [LARGE SCALE GENOMIC DNA]</scope>
    <source>
        <strain>cv. Salinas</strain>
    </source>
</reference>
<feature type="chain" id="PRO_0000048027" description="DNA-directed RNA polymerase subunit beta">
    <location>
        <begin position="1"/>
        <end position="1060"/>
    </location>
</feature>
<feature type="sequence conflict" description="In Ref. 1." evidence="2" ref="1">
    <original>R</original>
    <variation>RPAAQAWAAGR</variation>
    <location>
        <position position="255"/>
    </location>
</feature>
<protein>
    <recommendedName>
        <fullName evidence="1">DNA-directed RNA polymerase subunit beta</fullName>
        <ecNumber evidence="1">2.7.7.6</ecNumber>
    </recommendedName>
    <alternativeName>
        <fullName evidence="1">PEP</fullName>
    </alternativeName>
    <alternativeName>
        <fullName evidence="1">Plastid-encoded RNA polymerase subunit beta</fullName>
        <shortName evidence="1">RNA polymerase subunit beta</shortName>
    </alternativeName>
</protein>
<dbReference type="EC" id="2.7.7.6" evidence="1"/>
<dbReference type="EMBL" id="AY865171">
    <property type="protein sequence ID" value="AAX58142.1"/>
    <property type="molecule type" value="Genomic_DNA"/>
</dbReference>
<dbReference type="EMBL" id="AP007232">
    <property type="protein sequence ID" value="BAE47581.1"/>
    <property type="molecule type" value="Genomic_DNA"/>
</dbReference>
<dbReference type="EMBL" id="DQ383816">
    <property type="protein sequence ID" value="ABD47220.1"/>
    <property type="molecule type" value="Genomic_DNA"/>
</dbReference>
<dbReference type="RefSeq" id="YP_398316.1">
    <property type="nucleotide sequence ID" value="NC_007578.1"/>
</dbReference>
<dbReference type="SMR" id="Q56P13"/>
<dbReference type="EnsemblPlants" id="rna-gnl|WGS:NBSK|LSAT_1X118620_mrna">
    <property type="protein sequence ID" value="cds-PLY79777.1"/>
    <property type="gene ID" value="gene-LSAT_1X118620"/>
</dbReference>
<dbReference type="GeneID" id="3772845"/>
<dbReference type="Gramene" id="rna-gnl|WGS:NBSK|LSAT_1X118620_mrna">
    <property type="protein sequence ID" value="cds-PLY79777.1"/>
    <property type="gene ID" value="gene-LSAT_1X118620"/>
</dbReference>
<dbReference type="KEGG" id="lsv:3772845"/>
<dbReference type="OrthoDB" id="1927092at2759"/>
<dbReference type="GO" id="GO:0009507">
    <property type="term" value="C:chloroplast"/>
    <property type="evidence" value="ECO:0007669"/>
    <property type="project" value="UniProtKB-SubCell"/>
</dbReference>
<dbReference type="GO" id="GO:0000428">
    <property type="term" value="C:DNA-directed RNA polymerase complex"/>
    <property type="evidence" value="ECO:0007669"/>
    <property type="project" value="UniProtKB-KW"/>
</dbReference>
<dbReference type="GO" id="GO:0005739">
    <property type="term" value="C:mitochondrion"/>
    <property type="evidence" value="ECO:0007669"/>
    <property type="project" value="GOC"/>
</dbReference>
<dbReference type="GO" id="GO:0003677">
    <property type="term" value="F:DNA binding"/>
    <property type="evidence" value="ECO:0007669"/>
    <property type="project" value="UniProtKB-UniRule"/>
</dbReference>
<dbReference type="GO" id="GO:0003899">
    <property type="term" value="F:DNA-directed RNA polymerase activity"/>
    <property type="evidence" value="ECO:0007669"/>
    <property type="project" value="UniProtKB-UniRule"/>
</dbReference>
<dbReference type="GO" id="GO:0032549">
    <property type="term" value="F:ribonucleoside binding"/>
    <property type="evidence" value="ECO:0007669"/>
    <property type="project" value="InterPro"/>
</dbReference>
<dbReference type="GO" id="GO:0006351">
    <property type="term" value="P:DNA-templated transcription"/>
    <property type="evidence" value="ECO:0007669"/>
    <property type="project" value="UniProtKB-UniRule"/>
</dbReference>
<dbReference type="CDD" id="cd00653">
    <property type="entry name" value="RNA_pol_B_RPB2"/>
    <property type="match status" value="1"/>
</dbReference>
<dbReference type="Gene3D" id="2.40.50.100">
    <property type="match status" value="1"/>
</dbReference>
<dbReference type="Gene3D" id="2.40.50.150">
    <property type="match status" value="1"/>
</dbReference>
<dbReference type="Gene3D" id="3.90.1100.10">
    <property type="match status" value="1"/>
</dbReference>
<dbReference type="Gene3D" id="2.30.150.10">
    <property type="entry name" value="DNA-directed RNA polymerase, beta subunit, external 1 domain"/>
    <property type="match status" value="1"/>
</dbReference>
<dbReference type="Gene3D" id="2.40.270.10">
    <property type="entry name" value="DNA-directed RNA polymerase, subunit 2, domain 6"/>
    <property type="match status" value="1"/>
</dbReference>
<dbReference type="Gene3D" id="3.90.1800.10">
    <property type="entry name" value="RNA polymerase alpha subunit dimerisation domain"/>
    <property type="match status" value="1"/>
</dbReference>
<dbReference type="Gene3D" id="3.90.1110.10">
    <property type="entry name" value="RNA polymerase Rpb2, domain 2"/>
    <property type="match status" value="1"/>
</dbReference>
<dbReference type="HAMAP" id="MF_01321">
    <property type="entry name" value="RNApol_bact_RpoB"/>
    <property type="match status" value="1"/>
</dbReference>
<dbReference type="InterPro" id="IPR042107">
    <property type="entry name" value="DNA-dir_RNA_pol_bsu_ext_1_sf"/>
</dbReference>
<dbReference type="InterPro" id="IPR015712">
    <property type="entry name" value="DNA-dir_RNA_pol_su2"/>
</dbReference>
<dbReference type="InterPro" id="IPR007120">
    <property type="entry name" value="DNA-dir_RNAP_su2_dom"/>
</dbReference>
<dbReference type="InterPro" id="IPR037033">
    <property type="entry name" value="DNA-dir_RNAP_su2_hyb_sf"/>
</dbReference>
<dbReference type="InterPro" id="IPR010243">
    <property type="entry name" value="RNA_pol_bsu_bac"/>
</dbReference>
<dbReference type="InterPro" id="IPR007121">
    <property type="entry name" value="RNA_pol_bsu_CS"/>
</dbReference>
<dbReference type="InterPro" id="IPR007644">
    <property type="entry name" value="RNA_pol_bsu_protrusion"/>
</dbReference>
<dbReference type="InterPro" id="IPR007642">
    <property type="entry name" value="RNA_pol_Rpb2_2"/>
</dbReference>
<dbReference type="InterPro" id="IPR037034">
    <property type="entry name" value="RNA_pol_Rpb2_2_sf"/>
</dbReference>
<dbReference type="InterPro" id="IPR007645">
    <property type="entry name" value="RNA_pol_Rpb2_3"/>
</dbReference>
<dbReference type="InterPro" id="IPR007641">
    <property type="entry name" value="RNA_pol_Rpb2_7"/>
</dbReference>
<dbReference type="InterPro" id="IPR014724">
    <property type="entry name" value="RNA_pol_RPB2_OB-fold"/>
</dbReference>
<dbReference type="NCBIfam" id="NF001616">
    <property type="entry name" value="PRK00405.1"/>
    <property type="match status" value="1"/>
</dbReference>
<dbReference type="PANTHER" id="PTHR20856">
    <property type="entry name" value="DNA-DIRECTED RNA POLYMERASE I SUBUNIT 2"/>
    <property type="match status" value="1"/>
</dbReference>
<dbReference type="Pfam" id="PF04563">
    <property type="entry name" value="RNA_pol_Rpb2_1"/>
    <property type="match status" value="1"/>
</dbReference>
<dbReference type="Pfam" id="PF04561">
    <property type="entry name" value="RNA_pol_Rpb2_2"/>
    <property type="match status" value="1"/>
</dbReference>
<dbReference type="Pfam" id="PF04565">
    <property type="entry name" value="RNA_pol_Rpb2_3"/>
    <property type="match status" value="1"/>
</dbReference>
<dbReference type="Pfam" id="PF00562">
    <property type="entry name" value="RNA_pol_Rpb2_6"/>
    <property type="match status" value="1"/>
</dbReference>
<dbReference type="Pfam" id="PF04560">
    <property type="entry name" value="RNA_pol_Rpb2_7"/>
    <property type="match status" value="1"/>
</dbReference>
<dbReference type="SUPFAM" id="SSF64484">
    <property type="entry name" value="beta and beta-prime subunits of DNA dependent RNA-polymerase"/>
    <property type="match status" value="1"/>
</dbReference>
<dbReference type="PROSITE" id="PS01166">
    <property type="entry name" value="RNA_POL_BETA"/>
    <property type="match status" value="1"/>
</dbReference>
<accession>Q56P13</accession>
<accession>Q1KXP3</accession>
<accession>Q332Z1</accession>
<comment type="function">
    <text>DNA-dependent RNA polymerase catalyzes the transcription of DNA into RNA using the four ribonucleoside triphosphates as substrates.</text>
</comment>
<comment type="catalytic activity">
    <reaction evidence="1">
        <text>RNA(n) + a ribonucleoside 5'-triphosphate = RNA(n+1) + diphosphate</text>
        <dbReference type="Rhea" id="RHEA:21248"/>
        <dbReference type="Rhea" id="RHEA-COMP:14527"/>
        <dbReference type="Rhea" id="RHEA-COMP:17342"/>
        <dbReference type="ChEBI" id="CHEBI:33019"/>
        <dbReference type="ChEBI" id="CHEBI:61557"/>
        <dbReference type="ChEBI" id="CHEBI:140395"/>
        <dbReference type="EC" id="2.7.7.6"/>
    </reaction>
</comment>
<comment type="subunit">
    <text evidence="1">In plastids the minimal PEP RNA polymerase catalytic core is composed of four subunits: alpha, beta, beta', and beta''. When a (nuclear-encoded) sigma factor is associated with the core the holoenzyme is formed, which can initiate transcription.</text>
</comment>
<comment type="subcellular location">
    <subcellularLocation>
        <location>Plastid</location>
        <location>Chloroplast</location>
    </subcellularLocation>
</comment>
<comment type="similarity">
    <text evidence="1">Belongs to the RNA polymerase beta chain family.</text>
</comment>
<geneLocation type="chloroplast"/>
<name>RPOB_LACSA</name>
<proteinExistence type="inferred from homology"/>
<keyword id="KW-0150">Chloroplast</keyword>
<keyword id="KW-0240">DNA-directed RNA polymerase</keyword>
<keyword id="KW-0548">Nucleotidyltransferase</keyword>
<keyword id="KW-0934">Plastid</keyword>
<keyword id="KW-0804">Transcription</keyword>
<keyword id="KW-0808">Transferase</keyword>